<evidence type="ECO:0000250" key="1"/>
<evidence type="ECO:0000250" key="2">
    <source>
        <dbReference type="UniProtKB" id="P00157"/>
    </source>
</evidence>
<evidence type="ECO:0000255" key="3">
    <source>
        <dbReference type="PROSITE-ProRule" id="PRU00967"/>
    </source>
</evidence>
<evidence type="ECO:0000255" key="4">
    <source>
        <dbReference type="PROSITE-ProRule" id="PRU00968"/>
    </source>
</evidence>
<geneLocation type="mitochondrion"/>
<keyword id="KW-0249">Electron transport</keyword>
<keyword id="KW-0349">Heme</keyword>
<keyword id="KW-0408">Iron</keyword>
<keyword id="KW-0472">Membrane</keyword>
<keyword id="KW-0479">Metal-binding</keyword>
<keyword id="KW-0496">Mitochondrion</keyword>
<keyword id="KW-0999">Mitochondrion inner membrane</keyword>
<keyword id="KW-0679">Respiratory chain</keyword>
<keyword id="KW-0812">Transmembrane</keyword>
<keyword id="KW-1133">Transmembrane helix</keyword>
<keyword id="KW-0813">Transport</keyword>
<keyword id="KW-0830">Ubiquinone</keyword>
<comment type="function">
    <text evidence="2">Component of the ubiquinol-cytochrome c reductase complex (complex III or cytochrome b-c1 complex) that is part of the mitochondrial respiratory chain. The b-c1 complex mediates electron transfer from ubiquinol to cytochrome c. Contributes to the generation of a proton gradient across the mitochondrial membrane that is then used for ATP synthesis.</text>
</comment>
<comment type="cofactor">
    <cofactor evidence="2">
        <name>heme b</name>
        <dbReference type="ChEBI" id="CHEBI:60344"/>
    </cofactor>
    <text evidence="2">Binds 2 heme b groups non-covalently.</text>
</comment>
<comment type="subunit">
    <text evidence="2">The cytochrome bc1 complex contains 11 subunits: 3 respiratory subunits (MT-CYB, CYC1 and UQCRFS1), 2 core proteins (UQCRC1 and UQCRC2) and 6 low-molecular weight proteins (UQCRH/QCR6, UQCRB/QCR7, UQCRQ/QCR8, UQCR10/QCR9, UQCR11/QCR10 and a cleavage product of UQCRFS1). This cytochrome bc1 complex then forms a dimer.</text>
</comment>
<comment type="subcellular location">
    <subcellularLocation>
        <location evidence="2">Mitochondrion inner membrane</location>
        <topology evidence="2">Multi-pass membrane protein</topology>
    </subcellularLocation>
</comment>
<comment type="miscellaneous">
    <text evidence="1">Heme 1 (or BL or b562) is low-potential and absorbs at about 562 nm, and heme 2 (or BH or b566) is high-potential and absorbs at about 566 nm.</text>
</comment>
<comment type="similarity">
    <text evidence="3 4">Belongs to the cytochrome b family.</text>
</comment>
<comment type="caution">
    <text evidence="2">The full-length protein contains only eight transmembrane helices, not nine as predicted by bioinformatics tools.</text>
</comment>
<proteinExistence type="inferred from homology"/>
<organism>
    <name type="scientific">Lepus timidus</name>
    <name type="common">Mountain hare</name>
    <dbReference type="NCBI Taxonomy" id="62621"/>
    <lineage>
        <taxon>Eukaryota</taxon>
        <taxon>Metazoa</taxon>
        <taxon>Chordata</taxon>
        <taxon>Craniata</taxon>
        <taxon>Vertebrata</taxon>
        <taxon>Euteleostomi</taxon>
        <taxon>Mammalia</taxon>
        <taxon>Eutheria</taxon>
        <taxon>Euarchontoglires</taxon>
        <taxon>Glires</taxon>
        <taxon>Lagomorpha</taxon>
        <taxon>Leporidae</taxon>
        <taxon>Lepus</taxon>
    </lineage>
</organism>
<reference key="1">
    <citation type="journal article" date="2002" name="Genes Genet. Syst.">
        <title>Molecular phylogeny of Japanese Leporidae, the Amami rabbit Pentalagus furnessi, the Japanese hare Lepus brachyurus, and the mountain hare Lepus timidus, inferred from mitochondrial DNA sequences.</title>
        <authorList>
            <person name="Yamada F."/>
            <person name="Takaki M."/>
            <person name="Suzuki H."/>
        </authorList>
    </citation>
    <scope>NUCLEOTIDE SEQUENCE [GENOMIC DNA]</scope>
    <source>
        <strain>Isolate Ltim_Hokkaido 1</strain>
    </source>
</reference>
<reference key="2">
    <citation type="submission" date="1997-06" db="EMBL/GenBank/DDBJ databases">
        <title>Cytochrome b phylogeny of North American hares and jackrabbits (Lepus, Lagomorpha) and the effects of mutational saturation in outgroup taxa.</title>
        <authorList>
            <person name="Halanych K.M."/>
            <person name="Demboski J.R."/>
            <person name="van Vuuren B.J."/>
            <person name="Klein D.R."/>
            <person name="Cook J.A."/>
        </authorList>
    </citation>
    <scope>NUCLEOTIDE SEQUENCE [GENOMIC DNA] OF 1-234</scope>
    <source>
        <strain>Isolate UAM 23260</strain>
    </source>
</reference>
<feature type="chain" id="PRO_0000061113" description="Cytochrome b">
    <location>
        <begin position="1"/>
        <end position="379"/>
    </location>
</feature>
<feature type="transmembrane region" description="Helical" evidence="2">
    <location>
        <begin position="33"/>
        <end position="53"/>
    </location>
</feature>
<feature type="transmembrane region" description="Helical" evidence="2">
    <location>
        <begin position="77"/>
        <end position="98"/>
    </location>
</feature>
<feature type="transmembrane region" description="Helical" evidence="2">
    <location>
        <begin position="113"/>
        <end position="133"/>
    </location>
</feature>
<feature type="transmembrane region" description="Helical" evidence="2">
    <location>
        <begin position="178"/>
        <end position="198"/>
    </location>
</feature>
<feature type="transmembrane region" description="Helical" evidence="2">
    <location>
        <begin position="226"/>
        <end position="246"/>
    </location>
</feature>
<feature type="transmembrane region" description="Helical" evidence="2">
    <location>
        <begin position="288"/>
        <end position="308"/>
    </location>
</feature>
<feature type="transmembrane region" description="Helical" evidence="2">
    <location>
        <begin position="320"/>
        <end position="340"/>
    </location>
</feature>
<feature type="transmembrane region" description="Helical" evidence="2">
    <location>
        <begin position="347"/>
        <end position="367"/>
    </location>
</feature>
<feature type="binding site" description="axial binding residue" evidence="2">
    <location>
        <position position="83"/>
    </location>
    <ligand>
        <name>heme b</name>
        <dbReference type="ChEBI" id="CHEBI:60344"/>
        <label>b562</label>
    </ligand>
    <ligandPart>
        <name>Fe</name>
        <dbReference type="ChEBI" id="CHEBI:18248"/>
    </ligandPart>
</feature>
<feature type="binding site" description="axial binding residue" evidence="2">
    <location>
        <position position="97"/>
    </location>
    <ligand>
        <name>heme b</name>
        <dbReference type="ChEBI" id="CHEBI:60344"/>
        <label>b566</label>
    </ligand>
    <ligandPart>
        <name>Fe</name>
        <dbReference type="ChEBI" id="CHEBI:18248"/>
    </ligandPart>
</feature>
<feature type="binding site" description="axial binding residue" evidence="2">
    <location>
        <position position="182"/>
    </location>
    <ligand>
        <name>heme b</name>
        <dbReference type="ChEBI" id="CHEBI:60344"/>
        <label>b562</label>
    </ligand>
    <ligandPart>
        <name>Fe</name>
        <dbReference type="ChEBI" id="CHEBI:18248"/>
    </ligandPart>
</feature>
<feature type="binding site" description="axial binding residue" evidence="2">
    <location>
        <position position="196"/>
    </location>
    <ligand>
        <name>heme b</name>
        <dbReference type="ChEBI" id="CHEBI:60344"/>
        <label>b566</label>
    </ligand>
    <ligandPart>
        <name>Fe</name>
        <dbReference type="ChEBI" id="CHEBI:18248"/>
    </ligandPart>
</feature>
<feature type="binding site" evidence="2">
    <location>
        <position position="201"/>
    </location>
    <ligand>
        <name>a ubiquinone</name>
        <dbReference type="ChEBI" id="CHEBI:16389"/>
    </ligand>
</feature>
<gene>
    <name type="primary">MT-CYB</name>
    <name type="synonym">COB</name>
    <name type="synonym">CYTB</name>
    <name type="synonym">MTCYB</name>
</gene>
<protein>
    <recommendedName>
        <fullName>Cytochrome b</fullName>
    </recommendedName>
    <alternativeName>
        <fullName>Complex III subunit 3</fullName>
    </alternativeName>
    <alternativeName>
        <fullName>Complex III subunit III</fullName>
    </alternativeName>
    <alternativeName>
        <fullName>Cytochrome b-c1 complex subunit 3</fullName>
    </alternativeName>
    <alternativeName>
        <fullName>Ubiquinol-cytochrome-c reductase complex cytochrome b subunit</fullName>
    </alternativeName>
</protein>
<sequence length="379" mass="42793">MTNIRKTHPLLKIVNHSLIDLPAPSNISAWWNFGSLLGLCLMIQILTGLFLAMHYTSDTATAFSSVTHICRDVNYGWLIRYLHANGASMFFICLYMHVGRGIYYGSYTYLETWNIGIILLFAVMATAFMGYVLPWGQMSFWGATVITNLLSAIPYIGTTLVEWIWGGFSVDKATLTRFFAFHFILPFIIAALVMIHLLFLHETGSNNPSGIPSDSDKIPFHPYYTIKDLLGFLVLILLLMLLVLFSPDLLGDPDNYTPANPLNTPPHIKPEWYFLFAYAILRSIPNKLGGVLALVMSILILAIIPFLHMSKQRSMMFRPISQVLFWILVADLLTLTWIGGQPVEHPFITIGQVASILYFSIILILMPLASLIENKILKW</sequence>
<dbReference type="EMBL" id="AB058607">
    <property type="protein sequence ID" value="BAB40223.1"/>
    <property type="molecule type" value="Genomic_DNA"/>
</dbReference>
<dbReference type="EMBL" id="AF010155">
    <property type="protein sequence ID" value="AAB94495.1"/>
    <property type="molecule type" value="Genomic_DNA"/>
</dbReference>
<dbReference type="SMR" id="O47557"/>
<dbReference type="GO" id="GO:0005743">
    <property type="term" value="C:mitochondrial inner membrane"/>
    <property type="evidence" value="ECO:0007669"/>
    <property type="project" value="UniProtKB-SubCell"/>
</dbReference>
<dbReference type="GO" id="GO:0045275">
    <property type="term" value="C:respiratory chain complex III"/>
    <property type="evidence" value="ECO:0007669"/>
    <property type="project" value="InterPro"/>
</dbReference>
<dbReference type="GO" id="GO:0046872">
    <property type="term" value="F:metal ion binding"/>
    <property type="evidence" value="ECO:0007669"/>
    <property type="project" value="UniProtKB-KW"/>
</dbReference>
<dbReference type="GO" id="GO:0008121">
    <property type="term" value="F:ubiquinol-cytochrome-c reductase activity"/>
    <property type="evidence" value="ECO:0007669"/>
    <property type="project" value="InterPro"/>
</dbReference>
<dbReference type="GO" id="GO:0006122">
    <property type="term" value="P:mitochondrial electron transport, ubiquinol to cytochrome c"/>
    <property type="evidence" value="ECO:0007669"/>
    <property type="project" value="TreeGrafter"/>
</dbReference>
<dbReference type="CDD" id="cd00290">
    <property type="entry name" value="cytochrome_b_C"/>
    <property type="match status" value="1"/>
</dbReference>
<dbReference type="CDD" id="cd00284">
    <property type="entry name" value="Cytochrome_b_N"/>
    <property type="match status" value="1"/>
</dbReference>
<dbReference type="FunFam" id="1.20.810.10:FF:000002">
    <property type="entry name" value="Cytochrome b"/>
    <property type="match status" value="1"/>
</dbReference>
<dbReference type="Gene3D" id="1.20.810.10">
    <property type="entry name" value="Cytochrome Bc1 Complex, Chain C"/>
    <property type="match status" value="1"/>
</dbReference>
<dbReference type="InterPro" id="IPR005798">
    <property type="entry name" value="Cyt_b/b6_C"/>
</dbReference>
<dbReference type="InterPro" id="IPR036150">
    <property type="entry name" value="Cyt_b/b6_C_sf"/>
</dbReference>
<dbReference type="InterPro" id="IPR005797">
    <property type="entry name" value="Cyt_b/b6_N"/>
</dbReference>
<dbReference type="InterPro" id="IPR027387">
    <property type="entry name" value="Cytb/b6-like_sf"/>
</dbReference>
<dbReference type="InterPro" id="IPR030689">
    <property type="entry name" value="Cytochrome_b"/>
</dbReference>
<dbReference type="InterPro" id="IPR048260">
    <property type="entry name" value="Cytochrome_b_C_euk/bac"/>
</dbReference>
<dbReference type="InterPro" id="IPR048259">
    <property type="entry name" value="Cytochrome_b_N_euk/bac"/>
</dbReference>
<dbReference type="InterPro" id="IPR016174">
    <property type="entry name" value="Di-haem_cyt_TM"/>
</dbReference>
<dbReference type="PANTHER" id="PTHR19271">
    <property type="entry name" value="CYTOCHROME B"/>
    <property type="match status" value="1"/>
</dbReference>
<dbReference type="PANTHER" id="PTHR19271:SF16">
    <property type="entry name" value="CYTOCHROME B"/>
    <property type="match status" value="1"/>
</dbReference>
<dbReference type="Pfam" id="PF00032">
    <property type="entry name" value="Cytochrom_B_C"/>
    <property type="match status" value="1"/>
</dbReference>
<dbReference type="Pfam" id="PF00033">
    <property type="entry name" value="Cytochrome_B"/>
    <property type="match status" value="1"/>
</dbReference>
<dbReference type="PIRSF" id="PIRSF038885">
    <property type="entry name" value="COB"/>
    <property type="match status" value="1"/>
</dbReference>
<dbReference type="SUPFAM" id="SSF81648">
    <property type="entry name" value="a domain/subunit of cytochrome bc1 complex (Ubiquinol-cytochrome c reductase)"/>
    <property type="match status" value="1"/>
</dbReference>
<dbReference type="SUPFAM" id="SSF81342">
    <property type="entry name" value="Transmembrane di-heme cytochromes"/>
    <property type="match status" value="1"/>
</dbReference>
<dbReference type="PROSITE" id="PS51003">
    <property type="entry name" value="CYTB_CTER"/>
    <property type="match status" value="1"/>
</dbReference>
<dbReference type="PROSITE" id="PS51002">
    <property type="entry name" value="CYTB_NTER"/>
    <property type="match status" value="1"/>
</dbReference>
<name>CYB_LEPTI</name>
<accession>O47557</accession>
<accession>Q9B5V9</accession>